<accession>A3CZJ4</accession>
<protein>
    <recommendedName>
        <fullName evidence="1">Deoxyuridine 5'-triphosphate nucleotidohydrolase</fullName>
        <shortName evidence="1">dUTPase</shortName>
        <ecNumber evidence="1">3.6.1.23</ecNumber>
    </recommendedName>
    <alternativeName>
        <fullName evidence="1">dUTP pyrophosphatase</fullName>
    </alternativeName>
</protein>
<name>DUT_SHEB5</name>
<gene>
    <name evidence="1" type="primary">dut</name>
    <name type="ordered locus">Sbal_0375</name>
</gene>
<reference key="1">
    <citation type="submission" date="2007-02" db="EMBL/GenBank/DDBJ databases">
        <title>Complete sequence of chromosome of Shewanella baltica OS155.</title>
        <authorList>
            <consortium name="US DOE Joint Genome Institute"/>
            <person name="Copeland A."/>
            <person name="Lucas S."/>
            <person name="Lapidus A."/>
            <person name="Barry K."/>
            <person name="Detter J.C."/>
            <person name="Glavina del Rio T."/>
            <person name="Hammon N."/>
            <person name="Israni S."/>
            <person name="Dalin E."/>
            <person name="Tice H."/>
            <person name="Pitluck S."/>
            <person name="Sims D.R."/>
            <person name="Brettin T."/>
            <person name="Bruce D."/>
            <person name="Han C."/>
            <person name="Tapia R."/>
            <person name="Brainard J."/>
            <person name="Schmutz J."/>
            <person name="Larimer F."/>
            <person name="Land M."/>
            <person name="Hauser L."/>
            <person name="Kyrpides N."/>
            <person name="Mikhailova N."/>
            <person name="Brettar I."/>
            <person name="Klappenbach J."/>
            <person name="Konstantinidis K."/>
            <person name="Rodrigues J."/>
            <person name="Tiedje J."/>
            <person name="Richardson P."/>
        </authorList>
    </citation>
    <scope>NUCLEOTIDE SEQUENCE [LARGE SCALE GENOMIC DNA]</scope>
    <source>
        <strain>OS155 / ATCC BAA-1091</strain>
    </source>
</reference>
<comment type="function">
    <text evidence="1">This enzyme is involved in nucleotide metabolism: it produces dUMP, the immediate precursor of thymidine nucleotides and it decreases the intracellular concentration of dUTP so that uracil cannot be incorporated into DNA.</text>
</comment>
<comment type="catalytic activity">
    <reaction evidence="1">
        <text>dUTP + H2O = dUMP + diphosphate + H(+)</text>
        <dbReference type="Rhea" id="RHEA:10248"/>
        <dbReference type="ChEBI" id="CHEBI:15377"/>
        <dbReference type="ChEBI" id="CHEBI:15378"/>
        <dbReference type="ChEBI" id="CHEBI:33019"/>
        <dbReference type="ChEBI" id="CHEBI:61555"/>
        <dbReference type="ChEBI" id="CHEBI:246422"/>
        <dbReference type="EC" id="3.6.1.23"/>
    </reaction>
</comment>
<comment type="cofactor">
    <cofactor evidence="1">
        <name>Mg(2+)</name>
        <dbReference type="ChEBI" id="CHEBI:18420"/>
    </cofactor>
</comment>
<comment type="pathway">
    <text evidence="1">Pyrimidine metabolism; dUMP biosynthesis; dUMP from dCTP (dUTP route): step 2/2.</text>
</comment>
<comment type="similarity">
    <text evidence="1">Belongs to the dUTPase family.</text>
</comment>
<evidence type="ECO:0000255" key="1">
    <source>
        <dbReference type="HAMAP-Rule" id="MF_00116"/>
    </source>
</evidence>
<feature type="chain" id="PRO_1000015512" description="Deoxyuridine 5'-triphosphate nucleotidohydrolase">
    <location>
        <begin position="1"/>
        <end position="152"/>
    </location>
</feature>
<feature type="binding site" evidence="1">
    <location>
        <begin position="71"/>
        <end position="73"/>
    </location>
    <ligand>
        <name>substrate</name>
    </ligand>
</feature>
<feature type="binding site" evidence="1">
    <location>
        <position position="84"/>
    </location>
    <ligand>
        <name>substrate</name>
    </ligand>
</feature>
<feature type="binding site" evidence="1">
    <location>
        <begin position="88"/>
        <end position="90"/>
    </location>
    <ligand>
        <name>substrate</name>
    </ligand>
</feature>
<feature type="binding site" evidence="1">
    <location>
        <position position="98"/>
    </location>
    <ligand>
        <name>substrate</name>
    </ligand>
</feature>
<organism>
    <name type="scientific">Shewanella baltica (strain OS155 / ATCC BAA-1091)</name>
    <dbReference type="NCBI Taxonomy" id="325240"/>
    <lineage>
        <taxon>Bacteria</taxon>
        <taxon>Pseudomonadati</taxon>
        <taxon>Pseudomonadota</taxon>
        <taxon>Gammaproteobacteria</taxon>
        <taxon>Alteromonadales</taxon>
        <taxon>Shewanellaceae</taxon>
        <taxon>Shewanella</taxon>
    </lineage>
</organism>
<dbReference type="EC" id="3.6.1.23" evidence="1"/>
<dbReference type="EMBL" id="CP000563">
    <property type="protein sequence ID" value="ABN59907.1"/>
    <property type="molecule type" value="Genomic_DNA"/>
</dbReference>
<dbReference type="RefSeq" id="WP_006079867.1">
    <property type="nucleotide sequence ID" value="NC_009052.1"/>
</dbReference>
<dbReference type="SMR" id="A3CZJ4"/>
<dbReference type="STRING" id="325240.Sbal_0375"/>
<dbReference type="KEGG" id="sbl:Sbal_0375"/>
<dbReference type="HOGENOM" id="CLU_068508_1_1_6"/>
<dbReference type="OrthoDB" id="9809956at2"/>
<dbReference type="UniPathway" id="UPA00610">
    <property type="reaction ID" value="UER00666"/>
</dbReference>
<dbReference type="Proteomes" id="UP000001557">
    <property type="component" value="Chromosome"/>
</dbReference>
<dbReference type="GO" id="GO:0004170">
    <property type="term" value="F:dUTP diphosphatase activity"/>
    <property type="evidence" value="ECO:0007669"/>
    <property type="project" value="UniProtKB-UniRule"/>
</dbReference>
<dbReference type="GO" id="GO:0000287">
    <property type="term" value="F:magnesium ion binding"/>
    <property type="evidence" value="ECO:0007669"/>
    <property type="project" value="UniProtKB-UniRule"/>
</dbReference>
<dbReference type="GO" id="GO:0006226">
    <property type="term" value="P:dUMP biosynthetic process"/>
    <property type="evidence" value="ECO:0007669"/>
    <property type="project" value="UniProtKB-UniRule"/>
</dbReference>
<dbReference type="GO" id="GO:0046081">
    <property type="term" value="P:dUTP catabolic process"/>
    <property type="evidence" value="ECO:0007669"/>
    <property type="project" value="InterPro"/>
</dbReference>
<dbReference type="CDD" id="cd07557">
    <property type="entry name" value="trimeric_dUTPase"/>
    <property type="match status" value="1"/>
</dbReference>
<dbReference type="FunFam" id="2.70.40.10:FF:000002">
    <property type="entry name" value="dUTP diphosphatase"/>
    <property type="match status" value="1"/>
</dbReference>
<dbReference type="Gene3D" id="2.70.40.10">
    <property type="match status" value="1"/>
</dbReference>
<dbReference type="HAMAP" id="MF_00116">
    <property type="entry name" value="dUTPase_bact"/>
    <property type="match status" value="1"/>
</dbReference>
<dbReference type="InterPro" id="IPR008181">
    <property type="entry name" value="dUTPase"/>
</dbReference>
<dbReference type="InterPro" id="IPR029054">
    <property type="entry name" value="dUTPase-like"/>
</dbReference>
<dbReference type="InterPro" id="IPR036157">
    <property type="entry name" value="dUTPase-like_sf"/>
</dbReference>
<dbReference type="InterPro" id="IPR033704">
    <property type="entry name" value="dUTPase_trimeric"/>
</dbReference>
<dbReference type="NCBIfam" id="TIGR00576">
    <property type="entry name" value="dut"/>
    <property type="match status" value="1"/>
</dbReference>
<dbReference type="NCBIfam" id="NF001862">
    <property type="entry name" value="PRK00601.1"/>
    <property type="match status" value="1"/>
</dbReference>
<dbReference type="PANTHER" id="PTHR11241">
    <property type="entry name" value="DEOXYURIDINE 5'-TRIPHOSPHATE NUCLEOTIDOHYDROLASE"/>
    <property type="match status" value="1"/>
</dbReference>
<dbReference type="PANTHER" id="PTHR11241:SF0">
    <property type="entry name" value="DEOXYURIDINE 5'-TRIPHOSPHATE NUCLEOTIDOHYDROLASE"/>
    <property type="match status" value="1"/>
</dbReference>
<dbReference type="Pfam" id="PF00692">
    <property type="entry name" value="dUTPase"/>
    <property type="match status" value="1"/>
</dbReference>
<dbReference type="SUPFAM" id="SSF51283">
    <property type="entry name" value="dUTPase-like"/>
    <property type="match status" value="1"/>
</dbReference>
<proteinExistence type="inferred from homology"/>
<sequence length="152" mass="16067">MKTPIELKILDSRIGSEFPLPAYATPGSAGMDLRAMIDTTLTIAPGETVLIPTGIAIHVADQGLAAVILPRSGLGHKHGIVLGNLVGLIDSDYQGPLMVSCWNRSDSPFALEIGDRLAQLVFVPVVQAQFKLVDEFDSSDRGEGGFGHSGTK</sequence>
<keyword id="KW-0378">Hydrolase</keyword>
<keyword id="KW-0460">Magnesium</keyword>
<keyword id="KW-0479">Metal-binding</keyword>
<keyword id="KW-0546">Nucleotide metabolism</keyword>
<keyword id="KW-1185">Reference proteome</keyword>